<dbReference type="EC" id="5.4.99.7" evidence="6"/>
<dbReference type="EMBL" id="L04305">
    <property type="protein sequence ID" value="AAA34342.1"/>
    <property type="molecule type" value="Genomic_DNA"/>
</dbReference>
<dbReference type="EMBL" id="CP017624">
    <property type="protein sequence ID" value="AOW27286.1"/>
    <property type="molecule type" value="Genomic_DNA"/>
</dbReference>
<dbReference type="PIR" id="JN0664">
    <property type="entry name" value="JN0664"/>
</dbReference>
<dbReference type="RefSeq" id="XP_722612.2">
    <property type="nucleotide sequence ID" value="XM_717519.2"/>
</dbReference>
<dbReference type="SMR" id="Q04782"/>
<dbReference type="BioGRID" id="1218855">
    <property type="interactions" value="1"/>
</dbReference>
<dbReference type="FunCoup" id="Q04782">
    <property type="interactions" value="133"/>
</dbReference>
<dbReference type="STRING" id="237561.Q04782"/>
<dbReference type="BindingDB" id="Q04782"/>
<dbReference type="ChEMBL" id="CHEMBL1075056"/>
<dbReference type="DrugBank" id="DB00239">
    <property type="generic name" value="Oxiconazole"/>
</dbReference>
<dbReference type="EnsemblFungi" id="C2_02460W_A-T">
    <property type="protein sequence ID" value="C2_02460W_A-T-p1"/>
    <property type="gene ID" value="C2_02460W_A"/>
</dbReference>
<dbReference type="GeneID" id="3635761"/>
<dbReference type="KEGG" id="cal:CAALFM_C202460WA"/>
<dbReference type="CGD" id="CAL0000184383">
    <property type="gene designation" value="ERG7"/>
</dbReference>
<dbReference type="VEuPathDB" id="FungiDB:C2_02460W_A"/>
<dbReference type="eggNOG" id="KOG0497">
    <property type="taxonomic scope" value="Eukaryota"/>
</dbReference>
<dbReference type="HOGENOM" id="CLU_009074_2_1_1"/>
<dbReference type="InParanoid" id="Q04782"/>
<dbReference type="OrthoDB" id="21502at2759"/>
<dbReference type="UniPathway" id="UPA00767">
    <property type="reaction ID" value="UER00753"/>
</dbReference>
<dbReference type="PRO" id="PR:Q04782"/>
<dbReference type="Proteomes" id="UP000000559">
    <property type="component" value="Chromosome 2"/>
</dbReference>
<dbReference type="GO" id="GO:0005789">
    <property type="term" value="C:endoplasmic reticulum membrane"/>
    <property type="evidence" value="ECO:0007669"/>
    <property type="project" value="UniProtKB-SubCell"/>
</dbReference>
<dbReference type="GO" id="GO:0005811">
    <property type="term" value="C:lipid droplet"/>
    <property type="evidence" value="ECO:0000318"/>
    <property type="project" value="GO_Central"/>
</dbReference>
<dbReference type="GO" id="GO:0000250">
    <property type="term" value="F:lanosterol synthase activity"/>
    <property type="evidence" value="ECO:0000316"/>
    <property type="project" value="CGD"/>
</dbReference>
<dbReference type="GO" id="GO:0006696">
    <property type="term" value="P:ergosterol biosynthetic process"/>
    <property type="evidence" value="ECO:0000316"/>
    <property type="project" value="CGD"/>
</dbReference>
<dbReference type="GO" id="GO:0016104">
    <property type="term" value="P:triterpenoid biosynthetic process"/>
    <property type="evidence" value="ECO:0007669"/>
    <property type="project" value="InterPro"/>
</dbReference>
<dbReference type="CDD" id="cd02892">
    <property type="entry name" value="SQCY_1"/>
    <property type="match status" value="1"/>
</dbReference>
<dbReference type="FunFam" id="1.50.10.20:FF:000003">
    <property type="entry name" value="Terpene cyclase/mutase family member"/>
    <property type="match status" value="1"/>
</dbReference>
<dbReference type="FunFam" id="1.50.10.20:FF:000027">
    <property type="entry name" value="Terpene cyclase/mutase family member"/>
    <property type="match status" value="1"/>
</dbReference>
<dbReference type="Gene3D" id="1.50.10.20">
    <property type="match status" value="2"/>
</dbReference>
<dbReference type="Gene3D" id="6.20.120.20">
    <property type="match status" value="1"/>
</dbReference>
<dbReference type="InterPro" id="IPR032696">
    <property type="entry name" value="SQ_cyclase_C"/>
</dbReference>
<dbReference type="InterPro" id="IPR032697">
    <property type="entry name" value="SQ_cyclase_N"/>
</dbReference>
<dbReference type="InterPro" id="IPR018333">
    <property type="entry name" value="Squalene_cyclase"/>
</dbReference>
<dbReference type="InterPro" id="IPR002365">
    <property type="entry name" value="Terpene_synthase_CS"/>
</dbReference>
<dbReference type="InterPro" id="IPR008930">
    <property type="entry name" value="Terpenoid_cyclase/PrenylTrfase"/>
</dbReference>
<dbReference type="NCBIfam" id="TIGR01787">
    <property type="entry name" value="squalene_cyclas"/>
    <property type="match status" value="1"/>
</dbReference>
<dbReference type="PANTHER" id="PTHR11764:SF20">
    <property type="entry name" value="LANOSTEROL SYNTHASE"/>
    <property type="match status" value="1"/>
</dbReference>
<dbReference type="PANTHER" id="PTHR11764">
    <property type="entry name" value="TERPENE CYCLASE/MUTASE FAMILY MEMBER"/>
    <property type="match status" value="1"/>
</dbReference>
<dbReference type="Pfam" id="PF13243">
    <property type="entry name" value="SQHop_cyclase_C"/>
    <property type="match status" value="1"/>
</dbReference>
<dbReference type="Pfam" id="PF13249">
    <property type="entry name" value="SQHop_cyclase_N"/>
    <property type="match status" value="1"/>
</dbReference>
<dbReference type="SFLD" id="SFLDG01016">
    <property type="entry name" value="Prenyltransferase_Like_2"/>
    <property type="match status" value="1"/>
</dbReference>
<dbReference type="SUPFAM" id="SSF48239">
    <property type="entry name" value="Terpenoid cyclases/Protein prenyltransferases"/>
    <property type="match status" value="2"/>
</dbReference>
<dbReference type="PROSITE" id="PS01074">
    <property type="entry name" value="TERPENE_SYNTHASES"/>
    <property type="match status" value="1"/>
</dbReference>
<feature type="chain" id="PRO_0000072654" description="Lanosterol synthase">
    <location>
        <begin position="1"/>
        <end position="728"/>
    </location>
</feature>
<feature type="repeat" description="PFTB 1" evidence="3">
    <location>
        <begin position="117"/>
        <end position="159"/>
    </location>
</feature>
<feature type="repeat" description="PFTB 2" evidence="3">
    <location>
        <begin position="561"/>
        <end position="602"/>
    </location>
</feature>
<feature type="repeat" description="PFTB 3" evidence="3">
    <location>
        <begin position="611"/>
        <end position="657"/>
    </location>
</feature>
<feature type="active site" description="Proton donor" evidence="2">
    <location>
        <position position="450"/>
    </location>
</feature>
<feature type="sequence conflict" description="In Ref. 1; AAA34342." evidence="10" ref="1">
    <original>PD</original>
    <variation>SG</variation>
    <location>
        <begin position="66"/>
        <end position="67"/>
    </location>
</feature>
<proteinExistence type="evidence at protein level"/>
<organism>
    <name type="scientific">Candida albicans (strain SC5314 / ATCC MYA-2876)</name>
    <name type="common">Yeast</name>
    <dbReference type="NCBI Taxonomy" id="237561"/>
    <lineage>
        <taxon>Eukaryota</taxon>
        <taxon>Fungi</taxon>
        <taxon>Dikarya</taxon>
        <taxon>Ascomycota</taxon>
        <taxon>Saccharomycotina</taxon>
        <taxon>Pichiomycetes</taxon>
        <taxon>Debaryomycetaceae</taxon>
        <taxon>Candida/Lodderomyces clade</taxon>
        <taxon>Candida</taxon>
    </lineage>
</organism>
<sequence length="728" mass="83783">MYYSEEIGLPKTDISRWRLRSDALGRETWHYLSQSECESEPQSTFVQWLLESPDFPSPPSSDIHTPDEAARKGADFLKLLQLDNGIFPCQYKGPMFMTIGYVTANYYSKTEIPEPYRVEMIRYIVNTAHPVDGGWGLHSVDKSTCFGTTMNYVCLRLLGMEKDHPVLVKARKTLHRLGGAIKNPHWGKAWLSILNLYEWEGVNPAPPELWRLPYWLPIHPAKWWVHTRAIYLPLGYTSANRVQCELDPLLKEIRNEIYVPSQLPYESIKFGNQRNNVCGVDLYYPHTKILDFANSILSKWEAVRPKWLLNWVNKKVYDLIVKEYQNTEYLCIAPVSFAFNMVVTCHYEGSESENFKKLQNRMNDVLFHGPQGMTVMGTNGVQVWDAAFMVQYFFMTGLVDDPKYHDMIRKSYLFLVRSQFTENCVDGSFRDRRKGAWPFSTKEQGYTVSDCTAEAMKAIIMVRNHASFADIRDEIKDENLFDAVEVLLQIQNVGEWEYGSFSTYEGIKAPLLLEKLNPAEVFNNIMVEYPYVECTDSSVLGLTYFAKYYPDYKPELIQKTISSAIQYILDSQDNIDGSWYGCWGICYTYASMFALEALHTVGLDYESSSAVKKGCDFLISKQLPDGGWSESMKGCETHSYVNGENSLVVQSAWALIGLILGNYPDEEPIKRGIQFLMKRQLPTGEWKYEDIEGVFNHSCAIEYPSYRFLFPIKALGLYKNKYGDKVLV</sequence>
<gene>
    <name evidence="9" type="primary">ERG7</name>
    <name type="ordered locus">CAALFM_C202460WA</name>
    <name type="ORF">CaO19.1570</name>
</gene>
<name>ERG7_CANAL</name>
<evidence type="ECO:0000250" key="1">
    <source>
        <dbReference type="UniProtKB" id="P38604"/>
    </source>
</evidence>
<evidence type="ECO:0000250" key="2">
    <source>
        <dbReference type="UniProtKB" id="P48449"/>
    </source>
</evidence>
<evidence type="ECO:0000255" key="3"/>
<evidence type="ECO:0000269" key="4">
    <source>
    </source>
</evidence>
<evidence type="ECO:0000269" key="5">
    <source>
    </source>
</evidence>
<evidence type="ECO:0000269" key="6">
    <source>
    </source>
</evidence>
<evidence type="ECO:0000269" key="7">
    <source>
    </source>
</evidence>
<evidence type="ECO:0000303" key="8">
    <source>
    </source>
</evidence>
<evidence type="ECO:0000303" key="9">
    <source>
    </source>
</evidence>
<evidence type="ECO:0000305" key="10"/>
<accession>Q04782</accession>
<accession>A0A1D8PGL9</accession>
<accession>Q5AM05</accession>
<comment type="function">
    <text evidence="6 7 10">Lanosterol synthase; part of the third module of ergosterol biosynthesis pathway that includes the late steps of the pathway (PubMed:2185141, PubMed:8486282). ERG7 catalyzes the cyclization of (S)-2,3 oxidosqualene to lanosterol, a reaction that forms the sterol core (PubMed:2185141). The third module or late pathway involves the ergosterol synthesis itself through consecutive reactions that mainly occur in the endoplasmic reticulum (ER) membrane. Firstly, the squalene synthase ERG9 catalyzes the condensation of 2 farnesyl pyrophosphate moieties to form squalene, which is the precursor of all steroids. Squalene synthase is crucial for balancing the incorporation of farnesyl diphosphate (FPP) into sterol and nonsterol isoprene synthesis. Secondly, the squalene epoxidase ERG1 catalyzes the stereospecific oxidation of squalene to (S)-2,3-epoxysqualene, which is considered to be a rate-limiting enzyme in steroid biosynthesis. Then, the lanosterol synthase ERG7 catalyzes the cyclization of (S)-2,3 oxidosqualene to lanosterol, a reaction that forms the sterol core. In the next steps, lanosterol is transformed to zymosterol through a complex process involving various demethylation, reduction and desaturation reactions. The lanosterol 14-alpha-demethylase ERG11 (also known as CYP51) catalyzes C14-demethylation of lanosterol to produce 4,4'-dimethyl cholesta-8,14,24-triene-3-beta-ol, which is critical for ergosterol biosynthesis. The C-14 reductase ERG24 reduces the C14=C15 double bond of 4,4-dimethyl-cholesta-8,14,24-trienol to produce 4,4-dimethyl-cholesta-8,24-dienol. 4,4-dimethyl-cholesta-8,24-dienol is substrate of the C-4 demethylation complex ERG25-ERG26-ERG27 in which ERG25 catalyzes the three-step monooxygenation required for the demethylation of 4,4-dimethyl and 4alpha-methylsterols, ERG26 catalyzes the oxidative decarboxylation that results in a reduction of the 3-beta-hydroxy group at the C-3 carbon to an oxo group, and ERG27 is responsible for the reduction of the keto group on the C-3. ERG28 has a role as a scaffold to help anchor ERG25, ERG26 and ERG27 to the endoplasmic reticulum and ERG29 regulates the activity of the iron-containing C4-methylsterol oxidase ERG25. Then, the sterol 24-C-methyltransferase ERG6 catalyzes the methyl transfer from S-adenosyl-methionine to the C-24 of zymosterol to form fecosterol. The C-8 sterol isomerase ERG2 catalyzes the reaction which results in unsaturation at C-7 in the B ring of sterols and thus converts fecosterol to episterol. The sterol-C5-desaturase ERG3 then catalyzes the introduction of a C-5 double bond in the B ring to produce 5-dehydroepisterol. The C-22 sterol desaturase ERG5 further converts 5-dehydroepisterol into ergosta-5,7,22,24(28)-tetraen-3beta-ol by forming the C-22(23) double bond in the sterol side chain. Finally, ergosta-5,7,22,24(28)-tetraen-3beta-ol is substrate of the C-24(28) sterol reductase ERG4 to produce ergosterol (Probable).</text>
</comment>
<comment type="catalytic activity">
    <reaction evidence="6">
        <text>(S)-2,3-epoxysqualene = lanosterol</text>
        <dbReference type="Rhea" id="RHEA:14621"/>
        <dbReference type="ChEBI" id="CHEBI:15441"/>
        <dbReference type="ChEBI" id="CHEBI:16521"/>
        <dbReference type="EC" id="5.4.99.7"/>
    </reaction>
    <physiologicalReaction direction="left-to-right" evidence="6">
        <dbReference type="Rhea" id="RHEA:14622"/>
    </physiologicalReaction>
</comment>
<comment type="pathway">
    <text evidence="6">Terpene metabolism; lanosterol biosynthesis; lanosterol from farnesyl diphosphate: step 3/3.</text>
</comment>
<comment type="subcellular location">
    <subcellularLocation>
        <location evidence="1">Lipid droplet</location>
    </subcellularLocation>
    <subcellularLocation>
        <location evidence="1">Endoplasmic reticulum membrane</location>
        <topology evidence="1">Peripheral membrane protein</topology>
    </subcellularLocation>
    <text evidence="1">Predominantly in lipid particles.</text>
</comment>
<comment type="induction">
    <text evidence="4 5">Expression is induced in the presence of fluconazole (PubMed:15820985). Expression is up-regulated when ERG6, CYP51/ERG11 or ERG24 are deleted (PubMed:15473366).</text>
</comment>
<comment type="similarity">
    <text evidence="10">Belongs to the terpene cyclase/mutase family.</text>
</comment>
<reference key="1">
    <citation type="journal article" date="1993" name="Gene">
        <title>Sequence of the Candida albicans erg7 gene.</title>
        <authorList>
            <person name="Roessner C.A."/>
            <person name="Min C."/>
            <person name="Hardin S.H."/>
            <person name="Harris-Haller L.W."/>
            <person name="McCollum J.C."/>
            <person name="Scott A.I."/>
        </authorList>
    </citation>
    <scope>NUCLEOTIDE SEQUENCE [GENOMIC DNA]</scope>
    <scope>FUNCTION</scope>
</reference>
<reference key="2">
    <citation type="journal article" date="2004" name="Proc. Natl. Acad. Sci. U.S.A.">
        <title>The diploid genome sequence of Candida albicans.</title>
        <authorList>
            <person name="Jones T."/>
            <person name="Federspiel N.A."/>
            <person name="Chibana H."/>
            <person name="Dungan J."/>
            <person name="Kalman S."/>
            <person name="Magee B.B."/>
            <person name="Newport G."/>
            <person name="Thorstenson Y.R."/>
            <person name="Agabian N."/>
            <person name="Magee P.T."/>
            <person name="Davis R.W."/>
            <person name="Scherer S."/>
        </authorList>
    </citation>
    <scope>NUCLEOTIDE SEQUENCE [LARGE SCALE GENOMIC DNA]</scope>
    <source>
        <strain>SC5314 / ATCC MYA-2876</strain>
    </source>
</reference>
<reference key="3">
    <citation type="journal article" date="2007" name="Genome Biol.">
        <title>Assembly of the Candida albicans genome into sixteen supercontigs aligned on the eight chromosomes.</title>
        <authorList>
            <person name="van het Hoog M."/>
            <person name="Rast T.J."/>
            <person name="Martchenko M."/>
            <person name="Grindle S."/>
            <person name="Dignard D."/>
            <person name="Hogues H."/>
            <person name="Cuomo C."/>
            <person name="Berriman M."/>
            <person name="Scherer S."/>
            <person name="Magee B.B."/>
            <person name="Whiteway M."/>
            <person name="Chibana H."/>
            <person name="Nantel A."/>
            <person name="Magee P.T."/>
        </authorList>
    </citation>
    <scope>GENOME REANNOTATION</scope>
    <source>
        <strain>SC5314 / ATCC MYA-2876</strain>
    </source>
</reference>
<reference key="4">
    <citation type="journal article" date="2013" name="Genome Biol.">
        <title>Assembly of a phased diploid Candida albicans genome facilitates allele-specific measurements and provides a simple model for repeat and indel structure.</title>
        <authorList>
            <person name="Muzzey D."/>
            <person name="Schwartz K."/>
            <person name="Weissman J.S."/>
            <person name="Sherlock G."/>
        </authorList>
    </citation>
    <scope>NUCLEOTIDE SEQUENCE [LARGE SCALE GENOMIC DNA]</scope>
    <scope>GENOME REANNOTATION</scope>
    <source>
        <strain>SC5314 / ATCC MYA-2876</strain>
    </source>
</reference>
<reference key="5">
    <citation type="journal article" date="1990" name="Gene">
        <title>Cloning and characterization of the 2,3-oxidosqualene cyclase-coding gene of Candida albicans.</title>
        <authorList>
            <person name="Kelly R."/>
            <person name="Miller S.M."/>
            <person name="Lai M.H."/>
            <person name="Kirsch D.R."/>
        </authorList>
    </citation>
    <scope>FUNCTION</scope>
    <scope>CATALYTIC ACTIVITY</scope>
    <scope>PATHWAY</scope>
</reference>
<reference key="6">
    <citation type="journal article" date="2004" name="Med. Mycol.">
        <title>Ergosterol gene expression in wild-type and ergosterol-deficient mutants of Candida albicans.</title>
        <authorList>
            <person name="Pierson C.A."/>
            <person name="Eckstein J."/>
            <person name="Barbuch R."/>
            <person name="Bard M."/>
        </authorList>
    </citation>
    <scope>INDUCTION</scope>
</reference>
<reference key="7">
    <citation type="journal article" date="2005" name="J. Antimicrob. Chemother.">
        <title>Exposure of Candida albicans to antifungal agents affects expression of SAP2 and SAP9 secreted proteinase genes.</title>
        <authorList>
            <person name="Copping V.M.S."/>
            <person name="Barelle C.J."/>
            <person name="Hube B."/>
            <person name="Gow N.A.R."/>
            <person name="Brown A.J.P."/>
            <person name="Odds F.C."/>
        </authorList>
    </citation>
    <scope>INDUCTION</scope>
</reference>
<keyword id="KW-0256">Endoplasmic reticulum</keyword>
<keyword id="KW-0413">Isomerase</keyword>
<keyword id="KW-0444">Lipid biosynthesis</keyword>
<keyword id="KW-0551">Lipid droplet</keyword>
<keyword id="KW-0443">Lipid metabolism</keyword>
<keyword id="KW-0472">Membrane</keyword>
<keyword id="KW-1185">Reference proteome</keyword>
<keyword id="KW-0677">Repeat</keyword>
<keyword id="KW-0752">Steroid biosynthesis</keyword>
<protein>
    <recommendedName>
        <fullName evidence="10">Lanosterol synthase</fullName>
        <ecNumber evidence="6">5.4.99.7</ecNumber>
    </recommendedName>
    <alternativeName>
        <fullName evidence="10">2,3-epoxysqualene--lanosterol cyclase</fullName>
    </alternativeName>
    <alternativeName>
        <fullName evidence="9">Ergosterol biosynthesis protein 7</fullName>
    </alternativeName>
    <alternativeName>
        <fullName evidence="8">Oxidosqualene--lanosterol cyclase</fullName>
        <shortName evidence="8">OSC</shortName>
    </alternativeName>
</protein>